<proteinExistence type="inferred from homology"/>
<reference key="1">
    <citation type="submission" date="2008-08" db="EMBL/GenBank/DDBJ databases">
        <title>The complete genome sequence of Coprothermobacter proteolyticus strain ATCC 5245 / DSM 5265 / BT.</title>
        <authorList>
            <person name="Dodson R.J."/>
            <person name="Durkin A.S."/>
            <person name="Wu M."/>
            <person name="Eisen J."/>
            <person name="Sutton G."/>
        </authorList>
    </citation>
    <scope>NUCLEOTIDE SEQUENCE [LARGE SCALE GENOMIC DNA]</scope>
    <source>
        <strain>ATCC 35245 / DSM 5265 / OCM 4 / BT</strain>
    </source>
</reference>
<comment type="function">
    <text evidence="1">Required for maturation of 30S ribosomal subunits.</text>
</comment>
<comment type="subcellular location">
    <subcellularLocation>
        <location evidence="1">Cytoplasm</location>
    </subcellularLocation>
</comment>
<comment type="similarity">
    <text evidence="1">Belongs to the RimP family.</text>
</comment>
<name>RIMP_COPPD</name>
<feature type="chain" id="PRO_0000384633" description="Ribosome maturation factor RimP">
    <location>
        <begin position="1"/>
        <end position="169"/>
    </location>
</feature>
<dbReference type="EMBL" id="CP001145">
    <property type="protein sequence ID" value="ACI16927.1"/>
    <property type="molecule type" value="Genomic_DNA"/>
</dbReference>
<dbReference type="RefSeq" id="WP_012543579.1">
    <property type="nucleotide sequence ID" value="NC_011295.1"/>
</dbReference>
<dbReference type="SMR" id="B5Y930"/>
<dbReference type="STRING" id="309798.COPRO5265_0948"/>
<dbReference type="KEGG" id="cpo:COPRO5265_0948"/>
<dbReference type="eggNOG" id="COG0779">
    <property type="taxonomic scope" value="Bacteria"/>
</dbReference>
<dbReference type="HOGENOM" id="CLU_070525_2_2_9"/>
<dbReference type="OrthoDB" id="9805006at2"/>
<dbReference type="Proteomes" id="UP000001732">
    <property type="component" value="Chromosome"/>
</dbReference>
<dbReference type="GO" id="GO:0005829">
    <property type="term" value="C:cytosol"/>
    <property type="evidence" value="ECO:0007669"/>
    <property type="project" value="TreeGrafter"/>
</dbReference>
<dbReference type="GO" id="GO:0000028">
    <property type="term" value="P:ribosomal small subunit assembly"/>
    <property type="evidence" value="ECO:0007669"/>
    <property type="project" value="TreeGrafter"/>
</dbReference>
<dbReference type="GO" id="GO:0006412">
    <property type="term" value="P:translation"/>
    <property type="evidence" value="ECO:0007669"/>
    <property type="project" value="TreeGrafter"/>
</dbReference>
<dbReference type="CDD" id="cd01734">
    <property type="entry name" value="YlxS_C"/>
    <property type="match status" value="1"/>
</dbReference>
<dbReference type="Gene3D" id="3.30.300.70">
    <property type="entry name" value="RimP-like superfamily, N-terminal"/>
    <property type="match status" value="1"/>
</dbReference>
<dbReference type="HAMAP" id="MF_01077">
    <property type="entry name" value="RimP"/>
    <property type="match status" value="1"/>
</dbReference>
<dbReference type="InterPro" id="IPR003728">
    <property type="entry name" value="Ribosome_maturation_RimP"/>
</dbReference>
<dbReference type="InterPro" id="IPR028998">
    <property type="entry name" value="RimP_C"/>
</dbReference>
<dbReference type="InterPro" id="IPR036847">
    <property type="entry name" value="RimP_C_sf"/>
</dbReference>
<dbReference type="InterPro" id="IPR028989">
    <property type="entry name" value="RimP_N"/>
</dbReference>
<dbReference type="InterPro" id="IPR035956">
    <property type="entry name" value="RimP_N_sf"/>
</dbReference>
<dbReference type="PANTHER" id="PTHR33867">
    <property type="entry name" value="RIBOSOME MATURATION FACTOR RIMP"/>
    <property type="match status" value="1"/>
</dbReference>
<dbReference type="PANTHER" id="PTHR33867:SF1">
    <property type="entry name" value="RIBOSOME MATURATION FACTOR RIMP"/>
    <property type="match status" value="1"/>
</dbReference>
<dbReference type="Pfam" id="PF17384">
    <property type="entry name" value="DUF150_C"/>
    <property type="match status" value="1"/>
</dbReference>
<dbReference type="Pfam" id="PF02576">
    <property type="entry name" value="RimP_N"/>
    <property type="match status" value="1"/>
</dbReference>
<dbReference type="SUPFAM" id="SSF74942">
    <property type="entry name" value="YhbC-like, C-terminal domain"/>
    <property type="match status" value="1"/>
</dbReference>
<dbReference type="SUPFAM" id="SSF75420">
    <property type="entry name" value="YhbC-like, N-terminal domain"/>
    <property type="match status" value="1"/>
</dbReference>
<keyword id="KW-0963">Cytoplasm</keyword>
<keyword id="KW-1185">Reference proteome</keyword>
<keyword id="KW-0690">Ribosome biogenesis</keyword>
<accession>B5Y930</accession>
<protein>
    <recommendedName>
        <fullName evidence="1">Ribosome maturation factor RimP</fullName>
    </recommendedName>
</protein>
<gene>
    <name evidence="1" type="primary">rimP</name>
    <name type="ordered locus">COPRO5265_0948</name>
</gene>
<sequence>MLSPKDRADLEERISKIVVSKGFYFIDLEERMEKGAHIISVVVHGEPSVTIGDCEKLTRAILPLLESFPWYGDNDHLEVTSPGLDRVLKREWEYEIFKGRVIDISFDRDGKSQTIRAKLVGRENENVVIEYEGNYFRIPFDQVRKAKLVFDEGGKEHGKKQKRSHRKGT</sequence>
<evidence type="ECO:0000255" key="1">
    <source>
        <dbReference type="HAMAP-Rule" id="MF_01077"/>
    </source>
</evidence>
<organism>
    <name type="scientific">Coprothermobacter proteolyticus (strain ATCC 35245 / DSM 5265 / OCM 4 / BT)</name>
    <dbReference type="NCBI Taxonomy" id="309798"/>
    <lineage>
        <taxon>Bacteria</taxon>
        <taxon>Pseudomonadati</taxon>
        <taxon>Coprothermobacterota</taxon>
        <taxon>Coprothermobacteria</taxon>
        <taxon>Coprothermobacterales</taxon>
        <taxon>Coprothermobacteraceae</taxon>
        <taxon>Coprothermobacter</taxon>
    </lineage>
</organism>